<sequence>MNALNQAHCEACRADAPKVTDEELAELIREIPDWNIEVRDGHMELERVFLFKNFKHALAFTNAVGEIAEAEGHHPGLLTEWGKVTVTWWSHSIKGLHRNDFIMCARTDKVAETAEGRK</sequence>
<reference key="1">
    <citation type="submission" date="2007-05" db="EMBL/GenBank/DDBJ databases">
        <title>Complete sequence of Pseudomonas putida F1.</title>
        <authorList>
            <consortium name="US DOE Joint Genome Institute"/>
            <person name="Copeland A."/>
            <person name="Lucas S."/>
            <person name="Lapidus A."/>
            <person name="Barry K."/>
            <person name="Detter J.C."/>
            <person name="Glavina del Rio T."/>
            <person name="Hammon N."/>
            <person name="Israni S."/>
            <person name="Dalin E."/>
            <person name="Tice H."/>
            <person name="Pitluck S."/>
            <person name="Chain P."/>
            <person name="Malfatti S."/>
            <person name="Shin M."/>
            <person name="Vergez L."/>
            <person name="Schmutz J."/>
            <person name="Larimer F."/>
            <person name="Land M."/>
            <person name="Hauser L."/>
            <person name="Kyrpides N."/>
            <person name="Lykidis A."/>
            <person name="Parales R."/>
            <person name="Richardson P."/>
        </authorList>
    </citation>
    <scope>NUCLEOTIDE SEQUENCE [LARGE SCALE GENOMIC DNA]</scope>
    <source>
        <strain>ATCC 700007 / DSM 6899 / JCM 31910 / BCRC 17059 / LMG 24140 / F1</strain>
    </source>
</reference>
<gene>
    <name type="ordered locus">Pput_1423</name>
</gene>
<comment type="catalytic activity">
    <reaction evidence="1">
        <text>(4aS,6R)-4a-hydroxy-L-erythro-5,6,7,8-tetrahydrobiopterin = (6R)-L-erythro-6,7-dihydrobiopterin + H2O</text>
        <dbReference type="Rhea" id="RHEA:11920"/>
        <dbReference type="ChEBI" id="CHEBI:15377"/>
        <dbReference type="ChEBI" id="CHEBI:15642"/>
        <dbReference type="ChEBI" id="CHEBI:43120"/>
        <dbReference type="EC" id="4.2.1.96"/>
    </reaction>
</comment>
<comment type="similarity">
    <text evidence="1">Belongs to the pterin-4-alpha-carbinolamine dehydratase family.</text>
</comment>
<accession>A5W0C1</accession>
<organism>
    <name type="scientific">Pseudomonas putida (strain ATCC 700007 / DSM 6899 / JCM 31910 / BCRC 17059 / LMG 24140 / F1)</name>
    <dbReference type="NCBI Taxonomy" id="351746"/>
    <lineage>
        <taxon>Bacteria</taxon>
        <taxon>Pseudomonadati</taxon>
        <taxon>Pseudomonadota</taxon>
        <taxon>Gammaproteobacteria</taxon>
        <taxon>Pseudomonadales</taxon>
        <taxon>Pseudomonadaceae</taxon>
        <taxon>Pseudomonas</taxon>
    </lineage>
</organism>
<protein>
    <recommendedName>
        <fullName evidence="1">Putative pterin-4-alpha-carbinolamine dehydratase</fullName>
        <shortName evidence="1">PHS</shortName>
        <ecNumber evidence="1">4.2.1.96</ecNumber>
    </recommendedName>
    <alternativeName>
        <fullName evidence="1">4-alpha-hydroxy-tetrahydropterin dehydratase</fullName>
    </alternativeName>
    <alternativeName>
        <fullName evidence="1">Pterin carbinolamine dehydratase</fullName>
        <shortName evidence="1">PCD</shortName>
    </alternativeName>
</protein>
<dbReference type="EC" id="4.2.1.96" evidence="1"/>
<dbReference type="EMBL" id="CP000712">
    <property type="protein sequence ID" value="ABQ77581.1"/>
    <property type="molecule type" value="Genomic_DNA"/>
</dbReference>
<dbReference type="SMR" id="A5W0C1"/>
<dbReference type="KEGG" id="ppf:Pput_1423"/>
<dbReference type="eggNOG" id="COG2154">
    <property type="taxonomic scope" value="Bacteria"/>
</dbReference>
<dbReference type="HOGENOM" id="CLU_081974_2_2_6"/>
<dbReference type="GO" id="GO:0008124">
    <property type="term" value="F:4-alpha-hydroxytetrahydrobiopterin dehydratase activity"/>
    <property type="evidence" value="ECO:0007669"/>
    <property type="project" value="UniProtKB-UniRule"/>
</dbReference>
<dbReference type="GO" id="GO:0006729">
    <property type="term" value="P:tetrahydrobiopterin biosynthetic process"/>
    <property type="evidence" value="ECO:0007669"/>
    <property type="project" value="InterPro"/>
</dbReference>
<dbReference type="CDD" id="cd00913">
    <property type="entry name" value="PCD_DCoH_subfamily_a"/>
    <property type="match status" value="1"/>
</dbReference>
<dbReference type="Gene3D" id="3.30.1360.20">
    <property type="entry name" value="Transcriptional coactivator/pterin dehydratase"/>
    <property type="match status" value="1"/>
</dbReference>
<dbReference type="HAMAP" id="MF_00434">
    <property type="entry name" value="Pterin_4_alpha"/>
    <property type="match status" value="1"/>
</dbReference>
<dbReference type="InterPro" id="IPR036428">
    <property type="entry name" value="PCD_sf"/>
</dbReference>
<dbReference type="InterPro" id="IPR050376">
    <property type="entry name" value="Pterin-4-alpha-carb_dehyd"/>
</dbReference>
<dbReference type="InterPro" id="IPR001533">
    <property type="entry name" value="Pterin_deHydtase"/>
</dbReference>
<dbReference type="NCBIfam" id="NF002016">
    <property type="entry name" value="PRK00823.1-1"/>
    <property type="match status" value="1"/>
</dbReference>
<dbReference type="PANTHER" id="PTHR42805">
    <property type="entry name" value="PTERIN-4-ALPHA-CARBINOLAMINE DEHYDRATASE-RELATED"/>
    <property type="match status" value="1"/>
</dbReference>
<dbReference type="PANTHER" id="PTHR42805:SF1">
    <property type="entry name" value="PTERIN-4-ALPHA-CARBINOLAMINE DEHYDRATASE-RELATED"/>
    <property type="match status" value="1"/>
</dbReference>
<dbReference type="Pfam" id="PF01329">
    <property type="entry name" value="Pterin_4a"/>
    <property type="match status" value="1"/>
</dbReference>
<dbReference type="SUPFAM" id="SSF55248">
    <property type="entry name" value="PCD-like"/>
    <property type="match status" value="1"/>
</dbReference>
<feature type="chain" id="PRO_1000050438" description="Putative pterin-4-alpha-carbinolamine dehydratase">
    <location>
        <begin position="1"/>
        <end position="118"/>
    </location>
</feature>
<evidence type="ECO:0000255" key="1">
    <source>
        <dbReference type="HAMAP-Rule" id="MF_00434"/>
    </source>
</evidence>
<name>PHS_PSEP1</name>
<proteinExistence type="inferred from homology"/>
<keyword id="KW-0456">Lyase</keyword>